<evidence type="ECO:0000250" key="1">
    <source>
        <dbReference type="UniProtKB" id="P00403"/>
    </source>
</evidence>
<evidence type="ECO:0000250" key="2">
    <source>
        <dbReference type="UniProtKB" id="P00406"/>
    </source>
</evidence>
<evidence type="ECO:0000250" key="3">
    <source>
        <dbReference type="UniProtKB" id="P00410"/>
    </source>
</evidence>
<evidence type="ECO:0000250" key="4">
    <source>
        <dbReference type="UniProtKB" id="P68530"/>
    </source>
</evidence>
<evidence type="ECO:0000305" key="5"/>
<gene>
    <name type="primary">MT-CO2</name>
    <name type="synonym">COII</name>
    <name type="synonym">COX2</name>
    <name type="synonym">COXII</name>
    <name type="synonym">MTCO2</name>
</gene>
<accession>Q38PR9</accession>
<accession>Q2I3I4</accession>
<protein>
    <recommendedName>
        <fullName>Cytochrome c oxidase subunit 2</fullName>
        <ecNumber>7.1.1.9</ecNumber>
    </recommendedName>
    <alternativeName>
        <fullName>Cytochrome c oxidase polypeptide II</fullName>
    </alternativeName>
</protein>
<organism>
    <name type="scientific">Mammuthus primigenius</name>
    <name type="common">Siberian woolly mammoth</name>
    <dbReference type="NCBI Taxonomy" id="37349"/>
    <lineage>
        <taxon>Eukaryota</taxon>
        <taxon>Metazoa</taxon>
        <taxon>Chordata</taxon>
        <taxon>Craniata</taxon>
        <taxon>Vertebrata</taxon>
        <taxon>Euteleostomi</taxon>
        <taxon>Mammalia</taxon>
        <taxon>Eutheria</taxon>
        <taxon>Afrotheria</taxon>
        <taxon>Proboscidea</taxon>
        <taxon>Elephantidae</taxon>
        <taxon>Mammuthus</taxon>
    </lineage>
</organism>
<geneLocation type="mitochondrion"/>
<feature type="chain" id="PRO_0000232843" description="Cytochrome c oxidase subunit 2">
    <location>
        <begin position="1"/>
        <end position="227"/>
    </location>
</feature>
<feature type="topological domain" description="Mitochondrial intermembrane" evidence="4">
    <location>
        <begin position="1"/>
        <end position="14"/>
    </location>
</feature>
<feature type="transmembrane region" description="Helical; Name=I" evidence="4">
    <location>
        <begin position="15"/>
        <end position="45"/>
    </location>
</feature>
<feature type="topological domain" description="Mitochondrial matrix" evidence="4">
    <location>
        <begin position="46"/>
        <end position="59"/>
    </location>
</feature>
<feature type="transmembrane region" description="Helical; Name=II" evidence="4">
    <location>
        <begin position="60"/>
        <end position="87"/>
    </location>
</feature>
<feature type="topological domain" description="Mitochondrial intermembrane" evidence="4">
    <location>
        <begin position="88"/>
        <end position="227"/>
    </location>
</feature>
<feature type="binding site" evidence="4">
    <location>
        <position position="161"/>
    </location>
    <ligand>
        <name>Cu cation</name>
        <dbReference type="ChEBI" id="CHEBI:23378"/>
        <label>A1</label>
    </ligand>
</feature>
<feature type="binding site" evidence="4">
    <location>
        <position position="196"/>
    </location>
    <ligand>
        <name>Cu cation</name>
        <dbReference type="ChEBI" id="CHEBI:23378"/>
        <label>A1</label>
    </ligand>
</feature>
<feature type="binding site" evidence="4">
    <location>
        <position position="196"/>
    </location>
    <ligand>
        <name>Cu cation</name>
        <dbReference type="ChEBI" id="CHEBI:23378"/>
        <label>A2</label>
    </ligand>
</feature>
<feature type="binding site" evidence="4">
    <location>
        <position position="198"/>
    </location>
    <ligand>
        <name>Cu cation</name>
        <dbReference type="ChEBI" id="CHEBI:23378"/>
        <label>A2</label>
    </ligand>
</feature>
<feature type="binding site" evidence="4">
    <location>
        <position position="198"/>
    </location>
    <ligand>
        <name>Mg(2+)</name>
        <dbReference type="ChEBI" id="CHEBI:18420"/>
        <note>ligand shared with MT-CO1</note>
    </ligand>
</feature>
<feature type="binding site" evidence="4">
    <location>
        <position position="200"/>
    </location>
    <ligand>
        <name>Cu cation</name>
        <dbReference type="ChEBI" id="CHEBI:23378"/>
        <label>A1</label>
    </ligand>
</feature>
<feature type="binding site" evidence="4">
    <location>
        <position position="200"/>
    </location>
    <ligand>
        <name>Cu cation</name>
        <dbReference type="ChEBI" id="CHEBI:23378"/>
        <label>A2</label>
    </ligand>
</feature>
<feature type="binding site" evidence="4">
    <location>
        <position position="204"/>
    </location>
    <ligand>
        <name>Cu cation</name>
        <dbReference type="ChEBI" id="CHEBI:23378"/>
        <label>A2</label>
    </ligand>
</feature>
<feature type="binding site" evidence="4">
    <location>
        <position position="207"/>
    </location>
    <ligand>
        <name>Cu cation</name>
        <dbReference type="ChEBI" id="CHEBI:23378"/>
        <label>A1</label>
    </ligand>
</feature>
<feature type="modified residue" description="Phosphotyrosine" evidence="2">
    <location>
        <position position="218"/>
    </location>
</feature>
<feature type="sequence conflict" description="In Ref. 2; ABC17881." evidence="5" ref="2">
    <original>T</original>
    <variation>M</variation>
    <location>
        <position position="146"/>
    </location>
</feature>
<keyword id="KW-0186">Copper</keyword>
<keyword id="KW-0249">Electron transport</keyword>
<keyword id="KW-0952">Extinct organism protein</keyword>
<keyword id="KW-0460">Magnesium</keyword>
<keyword id="KW-0472">Membrane</keyword>
<keyword id="KW-0479">Metal-binding</keyword>
<keyword id="KW-0496">Mitochondrion</keyword>
<keyword id="KW-0999">Mitochondrion inner membrane</keyword>
<keyword id="KW-0597">Phosphoprotein</keyword>
<keyword id="KW-0679">Respiratory chain</keyword>
<keyword id="KW-1278">Translocase</keyword>
<keyword id="KW-0812">Transmembrane</keyword>
<keyword id="KW-1133">Transmembrane helix</keyword>
<keyword id="KW-0813">Transport</keyword>
<sequence>MAYPLQLGFQDATSPVMEELLHFHDHTLMIIFLISSLVLYIIMLMLTTKLVHTNMMNVQEMEMIWTILPAIILILIALPSLHTLYMMDEINNPLLTIKTMGHQWFWSYEYTDYEDLAFDSYMITTDSLKFGELRLLEVDNRMVLPTDLPVRVLVSSEDVLHSWAVPSLGLKTDAIPGRLNQVTLTSMRPGLFYGQCSEICGANHSFMPIVLELVPLKYFESWSASLA</sequence>
<dbReference type="EC" id="7.1.1.9"/>
<dbReference type="EMBL" id="DQ188829">
    <property type="protein sequence ID" value="ABA29787.1"/>
    <property type="molecule type" value="Genomic_DNA"/>
</dbReference>
<dbReference type="EMBL" id="DQ316067">
    <property type="protein sequence ID" value="ABC17881.1"/>
    <property type="molecule type" value="Genomic_DNA"/>
</dbReference>
<dbReference type="RefSeq" id="YP_398757.1">
    <property type="nucleotide sequence ID" value="NC_007596.2"/>
</dbReference>
<dbReference type="SMR" id="Q38PR9"/>
<dbReference type="GeneID" id="3773144"/>
<dbReference type="CTD" id="4513"/>
<dbReference type="GO" id="GO:0005743">
    <property type="term" value="C:mitochondrial inner membrane"/>
    <property type="evidence" value="ECO:0007669"/>
    <property type="project" value="UniProtKB-SubCell"/>
</dbReference>
<dbReference type="GO" id="GO:0045277">
    <property type="term" value="C:respiratory chain complex IV"/>
    <property type="evidence" value="ECO:0000250"/>
    <property type="project" value="UniProtKB"/>
</dbReference>
<dbReference type="GO" id="GO:0005507">
    <property type="term" value="F:copper ion binding"/>
    <property type="evidence" value="ECO:0007669"/>
    <property type="project" value="InterPro"/>
</dbReference>
<dbReference type="GO" id="GO:0004129">
    <property type="term" value="F:cytochrome-c oxidase activity"/>
    <property type="evidence" value="ECO:0007669"/>
    <property type="project" value="UniProtKB-EC"/>
</dbReference>
<dbReference type="GO" id="GO:0042773">
    <property type="term" value="P:ATP synthesis coupled electron transport"/>
    <property type="evidence" value="ECO:0007669"/>
    <property type="project" value="TreeGrafter"/>
</dbReference>
<dbReference type="CDD" id="cd13912">
    <property type="entry name" value="CcO_II_C"/>
    <property type="match status" value="1"/>
</dbReference>
<dbReference type="FunFam" id="1.10.287.90:FF:000001">
    <property type="entry name" value="Cytochrome c oxidase subunit 2"/>
    <property type="match status" value="1"/>
</dbReference>
<dbReference type="FunFam" id="2.60.40.420:FF:000001">
    <property type="entry name" value="Cytochrome c oxidase subunit 2"/>
    <property type="match status" value="1"/>
</dbReference>
<dbReference type="Gene3D" id="1.10.287.90">
    <property type="match status" value="1"/>
</dbReference>
<dbReference type="Gene3D" id="2.60.40.420">
    <property type="entry name" value="Cupredoxins - blue copper proteins"/>
    <property type="match status" value="1"/>
</dbReference>
<dbReference type="InterPro" id="IPR045187">
    <property type="entry name" value="CcO_II"/>
</dbReference>
<dbReference type="InterPro" id="IPR002429">
    <property type="entry name" value="CcO_II-like_C"/>
</dbReference>
<dbReference type="InterPro" id="IPR034210">
    <property type="entry name" value="CcO_II_C"/>
</dbReference>
<dbReference type="InterPro" id="IPR001505">
    <property type="entry name" value="Copper_CuA"/>
</dbReference>
<dbReference type="InterPro" id="IPR008972">
    <property type="entry name" value="Cupredoxin"/>
</dbReference>
<dbReference type="InterPro" id="IPR014222">
    <property type="entry name" value="Cyt_c_oxidase_su2"/>
</dbReference>
<dbReference type="InterPro" id="IPR011759">
    <property type="entry name" value="Cyt_c_oxidase_su2_TM_dom"/>
</dbReference>
<dbReference type="InterPro" id="IPR036257">
    <property type="entry name" value="Cyt_c_oxidase_su2_TM_sf"/>
</dbReference>
<dbReference type="NCBIfam" id="TIGR02866">
    <property type="entry name" value="CoxB"/>
    <property type="match status" value="1"/>
</dbReference>
<dbReference type="PANTHER" id="PTHR22888:SF9">
    <property type="entry name" value="CYTOCHROME C OXIDASE SUBUNIT 2"/>
    <property type="match status" value="1"/>
</dbReference>
<dbReference type="PANTHER" id="PTHR22888">
    <property type="entry name" value="CYTOCHROME C OXIDASE, SUBUNIT II"/>
    <property type="match status" value="1"/>
</dbReference>
<dbReference type="Pfam" id="PF00116">
    <property type="entry name" value="COX2"/>
    <property type="match status" value="1"/>
</dbReference>
<dbReference type="Pfam" id="PF02790">
    <property type="entry name" value="COX2_TM"/>
    <property type="match status" value="1"/>
</dbReference>
<dbReference type="PRINTS" id="PR01166">
    <property type="entry name" value="CYCOXIDASEII"/>
</dbReference>
<dbReference type="SUPFAM" id="SSF49503">
    <property type="entry name" value="Cupredoxins"/>
    <property type="match status" value="1"/>
</dbReference>
<dbReference type="SUPFAM" id="SSF81464">
    <property type="entry name" value="Cytochrome c oxidase subunit II-like, transmembrane region"/>
    <property type="match status" value="1"/>
</dbReference>
<dbReference type="PROSITE" id="PS00078">
    <property type="entry name" value="COX2"/>
    <property type="match status" value="1"/>
</dbReference>
<dbReference type="PROSITE" id="PS50857">
    <property type="entry name" value="COX2_CUA"/>
    <property type="match status" value="1"/>
</dbReference>
<dbReference type="PROSITE" id="PS50999">
    <property type="entry name" value="COX2_TM"/>
    <property type="match status" value="1"/>
</dbReference>
<comment type="function">
    <text evidence="3">Component of the cytochrome c oxidase, the last enzyme in the mitochondrial electron transport chain which drives oxidative phosphorylation. The respiratory chain contains 3 multisubunit complexes succinate dehydrogenase (complex II, CII), ubiquinol-cytochrome c oxidoreductase (cytochrome b-c1 complex, complex III, CIII) and cytochrome c oxidase (complex IV, CIV), that cooperate to transfer electrons derived from NADH and succinate to molecular oxygen, creating an electrochemical gradient over the inner membrane that drives transmembrane transport and the ATP synthase. Cytochrome c oxidase is the component of the respiratory chain that catalyzes the reduction of oxygen to water. Electrons originating from reduced cytochrome c in the intermembrane space (IMS) are transferred via the dinuclear copper A center (CU(A)) of subunit 2 and heme A of subunit 1 to the active site in subunit 1, a binuclear center (BNC) formed by heme A3 and copper B (CU(B)). The BNC reduces molecular oxygen to 2 water molecules using 4 electrons from cytochrome c in the IMS and 4 protons from the mitochondrial matrix.</text>
</comment>
<comment type="catalytic activity">
    <reaction evidence="3">
        <text>4 Fe(II)-[cytochrome c] + O2 + 8 H(+)(in) = 4 Fe(III)-[cytochrome c] + 2 H2O + 4 H(+)(out)</text>
        <dbReference type="Rhea" id="RHEA:11436"/>
        <dbReference type="Rhea" id="RHEA-COMP:10350"/>
        <dbReference type="Rhea" id="RHEA-COMP:14399"/>
        <dbReference type="ChEBI" id="CHEBI:15377"/>
        <dbReference type="ChEBI" id="CHEBI:15378"/>
        <dbReference type="ChEBI" id="CHEBI:15379"/>
        <dbReference type="ChEBI" id="CHEBI:29033"/>
        <dbReference type="ChEBI" id="CHEBI:29034"/>
        <dbReference type="EC" id="7.1.1.9"/>
    </reaction>
    <physiologicalReaction direction="left-to-right" evidence="3">
        <dbReference type="Rhea" id="RHEA:11437"/>
    </physiologicalReaction>
</comment>
<comment type="cofactor">
    <cofactor evidence="4">
        <name>Cu cation</name>
        <dbReference type="ChEBI" id="CHEBI:23378"/>
    </cofactor>
    <text evidence="4">Binds a dinuclear copper A center per subunit.</text>
</comment>
<comment type="subunit">
    <text evidence="1 4">Component of the cytochrome c oxidase (complex IV, CIV), a multisubunit enzyme composed of 14 subunits. The complex is composed of a catalytic core of 3 subunits MT-CO1, MT-CO2 and MT-CO3, encoded in the mitochondrial DNA, and 11 supernumerary subunits COX4I, COX5A, COX5B, COX6A, COX6B, COX6C, COX7A, COX7B, COX7C, COX8 and NDUFA4, which are encoded in the nuclear genome. The complex exists as a monomer or a dimer and forms supercomplexes (SCs) in the inner mitochondrial membrane with NADH-ubiquinone oxidoreductase (complex I, CI) and ubiquinol-cytochrome c oxidoreductase (cytochrome b-c1 complex, complex III, CIII), resulting in different assemblies (supercomplex SCI(1)III(2)IV(1) and megacomplex MCI(2)III(2)IV(2)) (By similarity). Found in a complex with TMEM177, COA6, COX18, COX20, SCO1 and SCO2. Interacts with TMEM177 in a COX20-dependent manner. Interacts with COX20. Interacts with COX16 (By similarity).</text>
</comment>
<comment type="subcellular location">
    <subcellularLocation>
        <location evidence="4">Mitochondrion inner membrane</location>
        <topology evidence="4">Multi-pass membrane protein</topology>
    </subcellularLocation>
</comment>
<comment type="similarity">
    <text evidence="5">Belongs to the cytochrome c oxidase subunit 2 family.</text>
</comment>
<name>COX2_MAMPR</name>
<proteinExistence type="inferred from homology"/>
<reference key="1">
    <citation type="journal article" date="2006" name="Nature">
        <title>Multiplex amplification of the mammoth mitochondrial genome and the evolution of Elephantidae.</title>
        <authorList>
            <person name="Krause J."/>
            <person name="Dear P.H."/>
            <person name="Pollack J.L."/>
            <person name="Slatkin M."/>
            <person name="Spriggs H."/>
            <person name="Barnes I."/>
            <person name="Lister A.M."/>
            <person name="Ebersberger I."/>
            <person name="Paeaebo S."/>
            <person name="Hofreiter M."/>
        </authorList>
    </citation>
    <scope>NUCLEOTIDE SEQUENCE [GENOMIC DNA]</scope>
</reference>
<reference key="2">
    <citation type="journal article" date="2006" name="PLoS Biol.">
        <title>Complete mitochondrial genome and phylogeny of Pleistocene mammoth Mammuthus primigenius.</title>
        <authorList>
            <person name="Rogaev E.I."/>
            <person name="Moliaka Y.K."/>
            <person name="Malyarchuk B.A."/>
            <person name="Kondrashov F.A."/>
            <person name="Derenko M.V."/>
            <person name="Chumakov I."/>
            <person name="Grigorenko A.P."/>
        </authorList>
    </citation>
    <scope>NUCLEOTIDE SEQUENCE [GENOMIC DNA]</scope>
    <source>
        <tissue>Muscle</tissue>
    </source>
</reference>